<keyword id="KW-0520">NAD</keyword>
<keyword id="KW-0560">Oxidoreductase</keyword>
<organism>
    <name type="scientific">Rhizobium meliloti</name>
    <name type="common">Ensifer meliloti</name>
    <name type="synonym">Sinorhizobium meliloti</name>
    <dbReference type="NCBI Taxonomy" id="382"/>
    <lineage>
        <taxon>Bacteria</taxon>
        <taxon>Pseudomonadati</taxon>
        <taxon>Pseudomonadota</taxon>
        <taxon>Alphaproteobacteria</taxon>
        <taxon>Hyphomicrobiales</taxon>
        <taxon>Rhizobiaceae</taxon>
        <taxon>Sinorhizobium/Ensifer group</taxon>
        <taxon>Sinorhizobium</taxon>
    </lineage>
</organism>
<reference key="1">
    <citation type="journal article" date="1994" name="Mol. Gen. Genet.">
        <title>Molecular and genetic characterization of the rhizopine catabolism (mocABRC) genes of Rhizobium meliloti L5-30.</title>
        <authorList>
            <person name="Rossbach S."/>
            <person name="Kulpa D.A."/>
            <person name="Rossbach U."/>
            <person name="de Bruijn F.J."/>
        </authorList>
    </citation>
    <scope>NUCLEOTIDE SEQUENCE [GENOMIC DNA]</scope>
    <source>
        <strain>L5-30</strain>
    </source>
</reference>
<sequence>MTRFRLGLVGAGRMGQVHVRAAAESSLVEIAAVADPIAASRLNLAGNGIKTYETAGDMIEAGEVDGVLIATPSNTHVDTVADIAARGLPILCEKPCGVTAEEARKAADVAERYKVHLQIGYWRRFVPELKQLRDDIRAGLLGNLYLVSCFQWDEAPPANSFRATGGGAFIDMGVHEFDQMRWLTGQEPTNFRVATSKTTFAGAVKGDPDAVQLLCDLSDGSSGLVSLGRRFPPGDACWTQVFGTSGFAEARFFWPPDGEAVFLNALQAQLEDFVQAARGGAPRGATASDAVAALTIAEAATELLSRDLNKAEGNNVR</sequence>
<feature type="chain" id="PRO_0000091776" description="Rhizopine catabolism protein MocA">
    <location>
        <begin position="1"/>
        <end position="317"/>
    </location>
</feature>
<gene>
    <name type="primary">mocA</name>
</gene>
<proteinExistence type="inferred from homology"/>
<protein>
    <recommendedName>
        <fullName>Rhizopine catabolism protein MocA</fullName>
        <ecNumber>1.-.-.-</ecNumber>
    </recommendedName>
</protein>
<comment type="function">
    <text>Could catalyze the NADH-dependent dehydrogenase reaction involved in rhizopine (L-3-O-methyl-scyllo-inosamine) catabolism.</text>
</comment>
<comment type="similarity">
    <text evidence="1">Belongs to the Gfo/Idh/MocA family.</text>
</comment>
<accession>P49307</accession>
<name>MOCA_RHIML</name>
<dbReference type="EC" id="1.-.-.-"/>
<dbReference type="EMBL" id="X78503">
    <property type="protein sequence ID" value="CAA55269.1"/>
    <property type="molecule type" value="Genomic_DNA"/>
</dbReference>
<dbReference type="PIR" id="S51572">
    <property type="entry name" value="S51572"/>
</dbReference>
<dbReference type="RefSeq" id="WP_014528469.1">
    <property type="nucleotide sequence ID" value="NZ_CP021824.1"/>
</dbReference>
<dbReference type="SMR" id="P49307"/>
<dbReference type="PATRIC" id="fig|382.53.peg.1557"/>
<dbReference type="GO" id="GO:0005737">
    <property type="term" value="C:cytoplasm"/>
    <property type="evidence" value="ECO:0007669"/>
    <property type="project" value="TreeGrafter"/>
</dbReference>
<dbReference type="GO" id="GO:0000166">
    <property type="term" value="F:nucleotide binding"/>
    <property type="evidence" value="ECO:0007669"/>
    <property type="project" value="InterPro"/>
</dbReference>
<dbReference type="GO" id="GO:0016491">
    <property type="term" value="F:oxidoreductase activity"/>
    <property type="evidence" value="ECO:0007669"/>
    <property type="project" value="UniProtKB-KW"/>
</dbReference>
<dbReference type="GO" id="GO:0006740">
    <property type="term" value="P:NADPH regeneration"/>
    <property type="evidence" value="ECO:0007669"/>
    <property type="project" value="TreeGrafter"/>
</dbReference>
<dbReference type="Gene3D" id="3.30.360.10">
    <property type="entry name" value="Dihydrodipicolinate Reductase, domain 2"/>
    <property type="match status" value="1"/>
</dbReference>
<dbReference type="Gene3D" id="3.40.50.720">
    <property type="entry name" value="NAD(P)-binding Rossmann-like Domain"/>
    <property type="match status" value="1"/>
</dbReference>
<dbReference type="InterPro" id="IPR000683">
    <property type="entry name" value="Gfo/Idh/MocA-like_OxRdtase_N"/>
</dbReference>
<dbReference type="InterPro" id="IPR055170">
    <property type="entry name" value="GFO_IDH_MocA-like_dom"/>
</dbReference>
<dbReference type="InterPro" id="IPR036291">
    <property type="entry name" value="NAD(P)-bd_dom_sf"/>
</dbReference>
<dbReference type="PANTHER" id="PTHR42840:SF3">
    <property type="entry name" value="BINDING ROSSMANN FOLD OXIDOREDUCTASE, PUTATIVE (AFU_ORTHOLOGUE AFUA_2G10240)-RELATED"/>
    <property type="match status" value="1"/>
</dbReference>
<dbReference type="PANTHER" id="PTHR42840">
    <property type="entry name" value="NAD(P)-BINDING ROSSMANN-FOLD SUPERFAMILY PROTEIN-RELATED"/>
    <property type="match status" value="1"/>
</dbReference>
<dbReference type="Pfam" id="PF01408">
    <property type="entry name" value="GFO_IDH_MocA"/>
    <property type="match status" value="1"/>
</dbReference>
<dbReference type="Pfam" id="PF22725">
    <property type="entry name" value="GFO_IDH_MocA_C3"/>
    <property type="match status" value="1"/>
</dbReference>
<dbReference type="SUPFAM" id="SSF55347">
    <property type="entry name" value="Glyceraldehyde-3-phosphate dehydrogenase-like, C-terminal domain"/>
    <property type="match status" value="1"/>
</dbReference>
<dbReference type="SUPFAM" id="SSF51735">
    <property type="entry name" value="NAD(P)-binding Rossmann-fold domains"/>
    <property type="match status" value="1"/>
</dbReference>
<evidence type="ECO:0000305" key="1"/>